<accession>Q2NEZ9</accession>
<gene>
    <name evidence="1" type="primary">cobQ</name>
    <name type="ordered locus">Msp_1226</name>
</gene>
<comment type="function">
    <text evidence="1">Catalyzes amidations at positions B, D, E, and G on adenosylcobyrinic A,C-diamide. NH(2) groups are provided by glutamine, and one molecule of ATP is hydrogenolyzed for each amidation.</text>
</comment>
<comment type="pathway">
    <text evidence="1">Cofactor biosynthesis; adenosylcobalamin biosynthesis.</text>
</comment>
<comment type="similarity">
    <text evidence="1">Belongs to the CobB/CobQ family. CobQ subfamily.</text>
</comment>
<dbReference type="EMBL" id="CP000102">
    <property type="protein sequence ID" value="ABC57604.1"/>
    <property type="molecule type" value="Genomic_DNA"/>
</dbReference>
<dbReference type="RefSeq" id="WP_011406803.1">
    <property type="nucleotide sequence ID" value="NC_007681.1"/>
</dbReference>
<dbReference type="SMR" id="Q2NEZ9"/>
<dbReference type="STRING" id="339860.Msp_1226"/>
<dbReference type="GeneID" id="41325795"/>
<dbReference type="KEGG" id="mst:Msp_1226"/>
<dbReference type="eggNOG" id="arCOG00105">
    <property type="taxonomic scope" value="Archaea"/>
</dbReference>
<dbReference type="HOGENOM" id="CLU_019250_2_2_2"/>
<dbReference type="OrthoDB" id="53136at2157"/>
<dbReference type="UniPathway" id="UPA00148"/>
<dbReference type="Proteomes" id="UP000001931">
    <property type="component" value="Chromosome"/>
</dbReference>
<dbReference type="GO" id="GO:0015420">
    <property type="term" value="F:ABC-type vitamin B12 transporter activity"/>
    <property type="evidence" value="ECO:0007669"/>
    <property type="project" value="UniProtKB-UniRule"/>
</dbReference>
<dbReference type="GO" id="GO:0003824">
    <property type="term" value="F:catalytic activity"/>
    <property type="evidence" value="ECO:0007669"/>
    <property type="project" value="InterPro"/>
</dbReference>
<dbReference type="GO" id="GO:0009236">
    <property type="term" value="P:cobalamin biosynthetic process"/>
    <property type="evidence" value="ECO:0007669"/>
    <property type="project" value="UniProtKB-UniRule"/>
</dbReference>
<dbReference type="CDD" id="cd05389">
    <property type="entry name" value="CobQ_N"/>
    <property type="match status" value="1"/>
</dbReference>
<dbReference type="CDD" id="cd01750">
    <property type="entry name" value="GATase1_CobQ"/>
    <property type="match status" value="1"/>
</dbReference>
<dbReference type="Gene3D" id="3.40.50.880">
    <property type="match status" value="1"/>
</dbReference>
<dbReference type="Gene3D" id="3.40.50.300">
    <property type="entry name" value="P-loop containing nucleotide triphosphate hydrolases"/>
    <property type="match status" value="1"/>
</dbReference>
<dbReference type="HAMAP" id="MF_00028">
    <property type="entry name" value="CobQ"/>
    <property type="match status" value="1"/>
</dbReference>
<dbReference type="InterPro" id="IPR029062">
    <property type="entry name" value="Class_I_gatase-like"/>
</dbReference>
<dbReference type="InterPro" id="IPR002586">
    <property type="entry name" value="CobQ/CobB/MinD/ParA_Nub-bd_dom"/>
</dbReference>
<dbReference type="InterPro" id="IPR033949">
    <property type="entry name" value="CobQ_GATase1"/>
</dbReference>
<dbReference type="InterPro" id="IPR047045">
    <property type="entry name" value="CobQ_N"/>
</dbReference>
<dbReference type="InterPro" id="IPR004459">
    <property type="entry name" value="CobQ_synth"/>
</dbReference>
<dbReference type="InterPro" id="IPR011698">
    <property type="entry name" value="GATase_3"/>
</dbReference>
<dbReference type="InterPro" id="IPR027417">
    <property type="entry name" value="P-loop_NTPase"/>
</dbReference>
<dbReference type="NCBIfam" id="TIGR00313">
    <property type="entry name" value="cobQ"/>
    <property type="match status" value="1"/>
</dbReference>
<dbReference type="NCBIfam" id="NF001989">
    <property type="entry name" value="PRK00784.1"/>
    <property type="match status" value="1"/>
</dbReference>
<dbReference type="PANTHER" id="PTHR21343:SF1">
    <property type="entry name" value="COBYRIC ACID SYNTHASE"/>
    <property type="match status" value="1"/>
</dbReference>
<dbReference type="PANTHER" id="PTHR21343">
    <property type="entry name" value="DETHIOBIOTIN SYNTHETASE"/>
    <property type="match status" value="1"/>
</dbReference>
<dbReference type="Pfam" id="PF01656">
    <property type="entry name" value="CbiA"/>
    <property type="match status" value="1"/>
</dbReference>
<dbReference type="Pfam" id="PF07685">
    <property type="entry name" value="GATase_3"/>
    <property type="match status" value="1"/>
</dbReference>
<dbReference type="SUPFAM" id="SSF52317">
    <property type="entry name" value="Class I glutamine amidotransferase-like"/>
    <property type="match status" value="1"/>
</dbReference>
<dbReference type="SUPFAM" id="SSF52540">
    <property type="entry name" value="P-loop containing nucleoside triphosphate hydrolases"/>
    <property type="match status" value="1"/>
</dbReference>
<dbReference type="PROSITE" id="PS51274">
    <property type="entry name" value="GATASE_COBBQ"/>
    <property type="match status" value="1"/>
</dbReference>
<organism>
    <name type="scientific">Methanosphaera stadtmanae (strain ATCC 43021 / DSM 3091 / JCM 11832 / MCB-3)</name>
    <dbReference type="NCBI Taxonomy" id="339860"/>
    <lineage>
        <taxon>Archaea</taxon>
        <taxon>Methanobacteriati</taxon>
        <taxon>Methanobacteriota</taxon>
        <taxon>Methanomada group</taxon>
        <taxon>Methanobacteria</taxon>
        <taxon>Methanobacteriales</taxon>
        <taxon>Methanobacteriaceae</taxon>
        <taxon>Methanosphaera</taxon>
    </lineage>
</organism>
<name>COBQ_METST</name>
<protein>
    <recommendedName>
        <fullName evidence="1">Probable cobyric acid synthase</fullName>
    </recommendedName>
</protein>
<keyword id="KW-0169">Cobalamin biosynthesis</keyword>
<keyword id="KW-0315">Glutamine amidotransferase</keyword>
<keyword id="KW-1185">Reference proteome</keyword>
<reference key="1">
    <citation type="journal article" date="2006" name="J. Bacteriol.">
        <title>The genome sequence of Methanosphaera stadtmanae reveals why this human intestinal archaeon is restricted to methanol and H2 for methane formation and ATP synthesis.</title>
        <authorList>
            <person name="Fricke W.F."/>
            <person name="Seedorf H."/>
            <person name="Henne A."/>
            <person name="Kruer M."/>
            <person name="Liesegang H."/>
            <person name="Hedderich R."/>
            <person name="Gottschalk G."/>
            <person name="Thauer R.K."/>
        </authorList>
    </citation>
    <scope>NUCLEOTIDE SEQUENCE [LARGE SCALE GENOMIC DNA]</scope>
    <source>
        <strain>ATCC 43021 / DSM 3091 / JCM 11832 / MCB-3</strain>
    </source>
</reference>
<sequence>MKYIMFQGTSSNAGKTLTVAALCNLLSRKGYRVTPFKSQNMSLNSYTTVDNDEMSIAQVMQSEAAGIEPNCNMNPILLKPKEDFTSQVIVQGKPAGNMRFDDYQNNFRTQAIKAIEESLEYLKEDYDITVIEGAGSPAEINMYDKDLANMLIARMTDADVILVADIDQGGVFASIVGTYFLIPEEDRKRIKAVIINKFRGNADVLKPGIEKIEELTNIPVIGIIPYDETLNLPEEDSASLSTHHFSENEKITIGTLRLPRISNFTDIDPLDYEEDIGIKLVSIYDDLEDLDALIIPGTRNTVNDLVELKKSGAFDKIKKISKEIPIFGICGGYQMLSNNIIDESCSESKYGSVEGLGLLDMTTEFGQIEKVVQQSEGTIIKDSSLGFEKDTKVTGYELHEGITILGDVEPLIKIKKGQGNDESGLYDGAINGNVCGTYFHGIFHNFEFRRKFTDQLRINKGLKPLGLTKDDFKESKRVNYDQLGDLFANNVDMSFFKDLLRD</sequence>
<proteinExistence type="inferred from homology"/>
<evidence type="ECO:0000255" key="1">
    <source>
        <dbReference type="HAMAP-Rule" id="MF_00028"/>
    </source>
</evidence>
<feature type="chain" id="PRO_0000332406" description="Probable cobyric acid synthase">
    <location>
        <begin position="1"/>
        <end position="502"/>
    </location>
</feature>
<feature type="domain" description="GATase cobBQ-type" evidence="1">
    <location>
        <begin position="250"/>
        <end position="448"/>
    </location>
</feature>
<feature type="active site" description="Nucleophile" evidence="1">
    <location>
        <position position="330"/>
    </location>
</feature>
<feature type="active site" evidence="1">
    <location>
        <position position="440"/>
    </location>
</feature>